<name>GPI14_KLULA</name>
<organism>
    <name type="scientific">Kluyveromyces lactis (strain ATCC 8585 / CBS 2359 / DSM 70799 / NBRC 1267 / NRRL Y-1140 / WM37)</name>
    <name type="common">Yeast</name>
    <name type="synonym">Candida sphaerica</name>
    <dbReference type="NCBI Taxonomy" id="284590"/>
    <lineage>
        <taxon>Eukaryota</taxon>
        <taxon>Fungi</taxon>
        <taxon>Dikarya</taxon>
        <taxon>Ascomycota</taxon>
        <taxon>Saccharomycotina</taxon>
        <taxon>Saccharomycetes</taxon>
        <taxon>Saccharomycetales</taxon>
        <taxon>Saccharomycetaceae</taxon>
        <taxon>Kluyveromyces</taxon>
    </lineage>
</organism>
<comment type="function">
    <text evidence="1">Mannosyltransferase involved in glycosylphosphatidylinositol-anchor biosynthesis. Transfers the first alpha-1,4-mannose to GlcN-acyl-PI during GPI precursor assembly. Required for cell wall integrity (By similarity).</text>
</comment>
<comment type="pathway">
    <text>Glycolipid biosynthesis; glycosylphosphatidylinositol-anchor biosynthesis.</text>
</comment>
<comment type="subcellular location">
    <subcellularLocation>
        <location evidence="1">Endoplasmic reticulum membrane</location>
        <topology evidence="1">Multi-pass membrane protein</topology>
    </subcellularLocation>
</comment>
<comment type="similarity">
    <text evidence="3">Belongs to the PIGM family.</text>
</comment>
<reference key="1">
    <citation type="journal article" date="2004" name="Nature">
        <title>Genome evolution in yeasts.</title>
        <authorList>
            <person name="Dujon B."/>
            <person name="Sherman D."/>
            <person name="Fischer G."/>
            <person name="Durrens P."/>
            <person name="Casaregola S."/>
            <person name="Lafontaine I."/>
            <person name="de Montigny J."/>
            <person name="Marck C."/>
            <person name="Neuveglise C."/>
            <person name="Talla E."/>
            <person name="Goffard N."/>
            <person name="Frangeul L."/>
            <person name="Aigle M."/>
            <person name="Anthouard V."/>
            <person name="Babour A."/>
            <person name="Barbe V."/>
            <person name="Barnay S."/>
            <person name="Blanchin S."/>
            <person name="Beckerich J.-M."/>
            <person name="Beyne E."/>
            <person name="Bleykasten C."/>
            <person name="Boisrame A."/>
            <person name="Boyer J."/>
            <person name="Cattolico L."/>
            <person name="Confanioleri F."/>
            <person name="de Daruvar A."/>
            <person name="Despons L."/>
            <person name="Fabre E."/>
            <person name="Fairhead C."/>
            <person name="Ferry-Dumazet H."/>
            <person name="Groppi A."/>
            <person name="Hantraye F."/>
            <person name="Hennequin C."/>
            <person name="Jauniaux N."/>
            <person name="Joyet P."/>
            <person name="Kachouri R."/>
            <person name="Kerrest A."/>
            <person name="Koszul R."/>
            <person name="Lemaire M."/>
            <person name="Lesur I."/>
            <person name="Ma L."/>
            <person name="Muller H."/>
            <person name="Nicaud J.-M."/>
            <person name="Nikolski M."/>
            <person name="Oztas S."/>
            <person name="Ozier-Kalogeropoulos O."/>
            <person name="Pellenz S."/>
            <person name="Potier S."/>
            <person name="Richard G.-F."/>
            <person name="Straub M.-L."/>
            <person name="Suleau A."/>
            <person name="Swennen D."/>
            <person name="Tekaia F."/>
            <person name="Wesolowski-Louvel M."/>
            <person name="Westhof E."/>
            <person name="Wirth B."/>
            <person name="Zeniou-Meyer M."/>
            <person name="Zivanovic Y."/>
            <person name="Bolotin-Fukuhara M."/>
            <person name="Thierry A."/>
            <person name="Bouchier C."/>
            <person name="Caudron B."/>
            <person name="Scarpelli C."/>
            <person name="Gaillardin C."/>
            <person name="Weissenbach J."/>
            <person name="Wincker P."/>
            <person name="Souciet J.-L."/>
        </authorList>
    </citation>
    <scope>NUCLEOTIDE SEQUENCE [LARGE SCALE GENOMIC DNA]</scope>
    <source>
        <strain>ATCC 8585 / CBS 2359 / DSM 70799 / NBRC 1267 / NRRL Y-1140 / WM37</strain>
    </source>
</reference>
<dbReference type="EC" id="2.4.1.-"/>
<dbReference type="EMBL" id="CR382124">
    <property type="protein sequence ID" value="CAH00588.1"/>
    <property type="molecule type" value="Genomic_DNA"/>
</dbReference>
<dbReference type="RefSeq" id="XP_453492.1">
    <property type="nucleotide sequence ID" value="XM_453492.1"/>
</dbReference>
<dbReference type="SMR" id="Q6CRE7"/>
<dbReference type="FunCoup" id="Q6CRE7">
    <property type="interactions" value="614"/>
</dbReference>
<dbReference type="STRING" id="284590.Q6CRE7"/>
<dbReference type="CAZy" id="GT50">
    <property type="family name" value="Glycosyltransferase Family 50"/>
</dbReference>
<dbReference type="PaxDb" id="284590-Q6CRE7"/>
<dbReference type="KEGG" id="kla:KLLA0_D09647g"/>
<dbReference type="eggNOG" id="KOG3893">
    <property type="taxonomic scope" value="Eukaryota"/>
</dbReference>
<dbReference type="HOGENOM" id="CLU_024220_3_1_1"/>
<dbReference type="InParanoid" id="Q6CRE7"/>
<dbReference type="OMA" id="LINCWIL"/>
<dbReference type="UniPathway" id="UPA00196"/>
<dbReference type="Proteomes" id="UP000000598">
    <property type="component" value="Chromosome D"/>
</dbReference>
<dbReference type="GO" id="GO:0005789">
    <property type="term" value="C:endoplasmic reticulum membrane"/>
    <property type="evidence" value="ECO:0007669"/>
    <property type="project" value="UniProtKB-SubCell"/>
</dbReference>
<dbReference type="GO" id="GO:1990529">
    <property type="term" value="C:glycosylphosphatidylinositol-mannosyltransferase I complex"/>
    <property type="evidence" value="ECO:0007669"/>
    <property type="project" value="TreeGrafter"/>
</dbReference>
<dbReference type="GO" id="GO:0051751">
    <property type="term" value="F:alpha-1,4-mannosyltransferase activity"/>
    <property type="evidence" value="ECO:0007669"/>
    <property type="project" value="InterPro"/>
</dbReference>
<dbReference type="GO" id="GO:0004376">
    <property type="term" value="F:glycolipid mannosyltransferase activity"/>
    <property type="evidence" value="ECO:0007669"/>
    <property type="project" value="InterPro"/>
</dbReference>
<dbReference type="GO" id="GO:0071555">
    <property type="term" value="P:cell wall organization"/>
    <property type="evidence" value="ECO:0007669"/>
    <property type="project" value="UniProtKB-KW"/>
</dbReference>
<dbReference type="GO" id="GO:0006506">
    <property type="term" value="P:GPI anchor biosynthetic process"/>
    <property type="evidence" value="ECO:0007669"/>
    <property type="project" value="UniProtKB-UniPathway"/>
</dbReference>
<dbReference type="InterPro" id="IPR007704">
    <property type="entry name" value="PIG-M"/>
</dbReference>
<dbReference type="PANTHER" id="PTHR12886:SF0">
    <property type="entry name" value="GPI MANNOSYLTRANSFERASE 1"/>
    <property type="match status" value="1"/>
</dbReference>
<dbReference type="PANTHER" id="PTHR12886">
    <property type="entry name" value="PIG-M MANNOSYLTRANSFERASE"/>
    <property type="match status" value="1"/>
</dbReference>
<dbReference type="Pfam" id="PF05007">
    <property type="entry name" value="Mannosyl_trans"/>
    <property type="match status" value="1"/>
</dbReference>
<gene>
    <name type="primary">GPI14</name>
    <name type="ordered locus">KLLA0D09647g</name>
</gene>
<accession>Q6CRE7</accession>
<evidence type="ECO:0000250" key="1"/>
<evidence type="ECO:0000255" key="2"/>
<evidence type="ECO:0000305" key="3"/>
<sequence length="402" mass="47035">MHRKVILLLTVSLLLRIGFFSYGIFQDSHFDVKYTDIDYFVFHDAAGYVNNGQSPYLRDTYRYTPLLSFLLLPNYYLKWIHMGKVFFVLFDLITGVMIIKLLQGSCQLTKQLILASIWLLNPIVITISTRGNAESVLCFLIICALYFLKRDRLLISGLFYGLSIHFKIYPIIYALPIGIYLLLSSHNRNCIWRLFMIGISTLIGITAPTYFMYKLYGSEFIEHSYMYHLTRTDHRHNFSIWNLVLLLESAGIHLSQSIELSKLAFVPQLTLCAVLPYLLWKSQTFENLMNVLFVQTYAFVTFNKVCTSQYFIWYLVLSPFYFANTTITWRKGVVCIFLWILSQAVWLSQAYLLEFKGQNVFFPNLFFGNIVFFLINVYLLGVFITDIKSRTSFQDNQHKKNI</sequence>
<proteinExistence type="inferred from homology"/>
<protein>
    <recommendedName>
        <fullName>GPI mannosyltransferase 1</fullName>
        <ecNumber>2.4.1.-</ecNumber>
    </recommendedName>
    <alternativeName>
        <fullName>GPI mannosyltransferase I</fullName>
        <shortName>GPI-MT-I</shortName>
    </alternativeName>
    <alternativeName>
        <fullName>Glycosylphosphatidylinositol-anchor biosynthesis protein 14</fullName>
    </alternativeName>
</protein>
<keyword id="KW-0961">Cell wall biogenesis/degradation</keyword>
<keyword id="KW-0256">Endoplasmic reticulum</keyword>
<keyword id="KW-0328">Glycosyltransferase</keyword>
<keyword id="KW-0337">GPI-anchor biosynthesis</keyword>
<keyword id="KW-0472">Membrane</keyword>
<keyword id="KW-1185">Reference proteome</keyword>
<keyword id="KW-0808">Transferase</keyword>
<keyword id="KW-0812">Transmembrane</keyword>
<keyword id="KW-1133">Transmembrane helix</keyword>
<feature type="chain" id="PRO_0000246231" description="GPI mannosyltransferase 1">
    <location>
        <begin position="1"/>
        <end position="402"/>
    </location>
</feature>
<feature type="transmembrane region" description="Helical" evidence="2">
    <location>
        <begin position="5"/>
        <end position="25"/>
    </location>
</feature>
<feature type="transmembrane region" description="Helical" evidence="2">
    <location>
        <begin position="79"/>
        <end position="99"/>
    </location>
</feature>
<feature type="transmembrane region" description="Helical" evidence="2">
    <location>
        <begin position="108"/>
        <end position="128"/>
    </location>
</feature>
<feature type="transmembrane region" description="Helical" evidence="2">
    <location>
        <begin position="162"/>
        <end position="182"/>
    </location>
</feature>
<feature type="transmembrane region" description="Helical" evidence="2">
    <location>
        <begin position="191"/>
        <end position="211"/>
    </location>
</feature>
<feature type="transmembrane region" description="Helical" evidence="2">
    <location>
        <begin position="238"/>
        <end position="258"/>
    </location>
</feature>
<feature type="transmembrane region" description="Helical" evidence="2">
    <location>
        <begin position="260"/>
        <end position="280"/>
    </location>
</feature>
<feature type="transmembrane region" description="Helical" evidence="2">
    <location>
        <begin position="309"/>
        <end position="329"/>
    </location>
</feature>
<feature type="transmembrane region" description="Helical" evidence="2">
    <location>
        <begin position="333"/>
        <end position="353"/>
    </location>
</feature>
<feature type="transmembrane region" description="Helical" evidence="2">
    <location>
        <begin position="365"/>
        <end position="385"/>
    </location>
</feature>